<name>GRPE_KLEP7</name>
<gene>
    <name evidence="1" type="primary">grpE</name>
    <name type="ordered locus">KPN78578_28810</name>
    <name type="ORF">KPN_02936</name>
</gene>
<reference key="1">
    <citation type="submission" date="2006-09" db="EMBL/GenBank/DDBJ databases">
        <authorList>
            <consortium name="The Klebsiella pneumonia Genome Sequencing Project"/>
            <person name="McClelland M."/>
            <person name="Sanderson E.K."/>
            <person name="Spieth J."/>
            <person name="Clifton W.S."/>
            <person name="Latreille P."/>
            <person name="Sabo A."/>
            <person name="Pepin K."/>
            <person name="Bhonagiri V."/>
            <person name="Porwollik S."/>
            <person name="Ali J."/>
            <person name="Wilson R.K."/>
        </authorList>
    </citation>
    <scope>NUCLEOTIDE SEQUENCE [LARGE SCALE GENOMIC DNA]</scope>
    <source>
        <strain>ATCC 700721 / MGH 78578</strain>
    </source>
</reference>
<protein>
    <recommendedName>
        <fullName evidence="1">Protein GrpE</fullName>
    </recommendedName>
    <alternativeName>
        <fullName evidence="1">HSP-70 cofactor</fullName>
    </alternativeName>
</protein>
<evidence type="ECO:0000255" key="1">
    <source>
        <dbReference type="HAMAP-Rule" id="MF_01151"/>
    </source>
</evidence>
<evidence type="ECO:0000256" key="2">
    <source>
        <dbReference type="SAM" id="MobiDB-lite"/>
    </source>
</evidence>
<keyword id="KW-0143">Chaperone</keyword>
<keyword id="KW-0963">Cytoplasm</keyword>
<keyword id="KW-0346">Stress response</keyword>
<accession>A6TCM1</accession>
<organism>
    <name type="scientific">Klebsiella pneumoniae subsp. pneumoniae (strain ATCC 700721 / MGH 78578)</name>
    <dbReference type="NCBI Taxonomy" id="272620"/>
    <lineage>
        <taxon>Bacteria</taxon>
        <taxon>Pseudomonadati</taxon>
        <taxon>Pseudomonadota</taxon>
        <taxon>Gammaproteobacteria</taxon>
        <taxon>Enterobacterales</taxon>
        <taxon>Enterobacteriaceae</taxon>
        <taxon>Klebsiella/Raoultella group</taxon>
        <taxon>Klebsiella</taxon>
        <taxon>Klebsiella pneumoniae complex</taxon>
    </lineage>
</organism>
<dbReference type="EMBL" id="CP000647">
    <property type="protein sequence ID" value="ABR78342.1"/>
    <property type="molecule type" value="Genomic_DNA"/>
</dbReference>
<dbReference type="RefSeq" id="WP_004174800.1">
    <property type="nucleotide sequence ID" value="NC_009648.1"/>
</dbReference>
<dbReference type="SMR" id="A6TCM1"/>
<dbReference type="STRING" id="272620.KPN_02936"/>
<dbReference type="jPOST" id="A6TCM1"/>
<dbReference type="PaxDb" id="272620-KPN_02936"/>
<dbReference type="EnsemblBacteria" id="ABR78342">
    <property type="protein sequence ID" value="ABR78342"/>
    <property type="gene ID" value="KPN_02936"/>
</dbReference>
<dbReference type="GeneID" id="93250234"/>
<dbReference type="KEGG" id="kpn:KPN_02936"/>
<dbReference type="HOGENOM" id="CLU_057217_6_0_6"/>
<dbReference type="Proteomes" id="UP000000265">
    <property type="component" value="Chromosome"/>
</dbReference>
<dbReference type="GO" id="GO:0005829">
    <property type="term" value="C:cytosol"/>
    <property type="evidence" value="ECO:0007669"/>
    <property type="project" value="TreeGrafter"/>
</dbReference>
<dbReference type="GO" id="GO:0000774">
    <property type="term" value="F:adenyl-nucleotide exchange factor activity"/>
    <property type="evidence" value="ECO:0007669"/>
    <property type="project" value="InterPro"/>
</dbReference>
<dbReference type="GO" id="GO:0042803">
    <property type="term" value="F:protein homodimerization activity"/>
    <property type="evidence" value="ECO:0007669"/>
    <property type="project" value="InterPro"/>
</dbReference>
<dbReference type="GO" id="GO:0051087">
    <property type="term" value="F:protein-folding chaperone binding"/>
    <property type="evidence" value="ECO:0007669"/>
    <property type="project" value="InterPro"/>
</dbReference>
<dbReference type="GO" id="GO:0051082">
    <property type="term" value="F:unfolded protein binding"/>
    <property type="evidence" value="ECO:0007669"/>
    <property type="project" value="TreeGrafter"/>
</dbReference>
<dbReference type="GO" id="GO:0006457">
    <property type="term" value="P:protein folding"/>
    <property type="evidence" value="ECO:0007669"/>
    <property type="project" value="InterPro"/>
</dbReference>
<dbReference type="CDD" id="cd00446">
    <property type="entry name" value="GrpE"/>
    <property type="match status" value="1"/>
</dbReference>
<dbReference type="FunFam" id="2.30.22.10:FF:000001">
    <property type="entry name" value="Protein GrpE"/>
    <property type="match status" value="1"/>
</dbReference>
<dbReference type="FunFam" id="3.90.20.20:FF:000001">
    <property type="entry name" value="Protein GrpE"/>
    <property type="match status" value="1"/>
</dbReference>
<dbReference type="Gene3D" id="3.90.20.20">
    <property type="match status" value="1"/>
</dbReference>
<dbReference type="Gene3D" id="2.30.22.10">
    <property type="entry name" value="Head domain of nucleotide exchange factor GrpE"/>
    <property type="match status" value="1"/>
</dbReference>
<dbReference type="HAMAP" id="MF_01151">
    <property type="entry name" value="GrpE"/>
    <property type="match status" value="1"/>
</dbReference>
<dbReference type="InterPro" id="IPR000740">
    <property type="entry name" value="GrpE"/>
</dbReference>
<dbReference type="InterPro" id="IPR013805">
    <property type="entry name" value="GrpE_coiled_coil"/>
</dbReference>
<dbReference type="InterPro" id="IPR009012">
    <property type="entry name" value="GrpE_head"/>
</dbReference>
<dbReference type="NCBIfam" id="NF007655">
    <property type="entry name" value="PRK10325.1"/>
    <property type="match status" value="1"/>
</dbReference>
<dbReference type="NCBIfam" id="NF010738">
    <property type="entry name" value="PRK14140.1"/>
    <property type="match status" value="1"/>
</dbReference>
<dbReference type="NCBIfam" id="NF010748">
    <property type="entry name" value="PRK14150.1"/>
    <property type="match status" value="1"/>
</dbReference>
<dbReference type="PANTHER" id="PTHR21237">
    <property type="entry name" value="GRPE PROTEIN"/>
    <property type="match status" value="1"/>
</dbReference>
<dbReference type="PANTHER" id="PTHR21237:SF23">
    <property type="entry name" value="GRPE PROTEIN HOMOLOG, MITOCHONDRIAL"/>
    <property type="match status" value="1"/>
</dbReference>
<dbReference type="Pfam" id="PF01025">
    <property type="entry name" value="GrpE"/>
    <property type="match status" value="1"/>
</dbReference>
<dbReference type="PRINTS" id="PR00773">
    <property type="entry name" value="GRPEPROTEIN"/>
</dbReference>
<dbReference type="SUPFAM" id="SSF58014">
    <property type="entry name" value="Coiled-coil domain of nucleotide exchange factor GrpE"/>
    <property type="match status" value="1"/>
</dbReference>
<dbReference type="SUPFAM" id="SSF51064">
    <property type="entry name" value="Head domain of nucleotide exchange factor GrpE"/>
    <property type="match status" value="1"/>
</dbReference>
<dbReference type="PROSITE" id="PS01071">
    <property type="entry name" value="GRPE"/>
    <property type="match status" value="1"/>
</dbReference>
<sequence>MSSKEQKTPEGQAPEEIITEQHDDVEAVEPEVSAEQVDPRDEKIANLEAQLAEAQKREREVMLRAKADEDNLRRRTEQDIEKAHKFALEKFVNELLPVIDSLDRALEVADKANPELAPMVEGIELTLKSMLDVVRKFGVEVIADTNVPLDPNVHQAIAMVESEDVAAGNVLAVMQKGYTLNGRTIRAAMVTVAKAK</sequence>
<feature type="chain" id="PRO_1000053591" description="Protein GrpE">
    <location>
        <begin position="1"/>
        <end position="196"/>
    </location>
</feature>
<feature type="region of interest" description="Disordered" evidence="2">
    <location>
        <begin position="1"/>
        <end position="41"/>
    </location>
</feature>
<proteinExistence type="inferred from homology"/>
<comment type="function">
    <text evidence="1">Participates actively in the response to hyperosmotic and heat shock by preventing the aggregation of stress-denatured proteins, in association with DnaK and GrpE. It is the nucleotide exchange factor for DnaK and may function as a thermosensor. Unfolded proteins bind initially to DnaJ; upon interaction with the DnaJ-bound protein, DnaK hydrolyzes its bound ATP, resulting in the formation of a stable complex. GrpE releases ADP from DnaK; ATP binding to DnaK triggers the release of the substrate protein, thus completing the reaction cycle. Several rounds of ATP-dependent interactions between DnaJ, DnaK and GrpE are required for fully efficient folding.</text>
</comment>
<comment type="subunit">
    <text evidence="1">Homodimer.</text>
</comment>
<comment type="subcellular location">
    <subcellularLocation>
        <location evidence="1">Cytoplasm</location>
    </subcellularLocation>
</comment>
<comment type="similarity">
    <text evidence="1">Belongs to the GrpE family.</text>
</comment>